<proteinExistence type="inferred from homology"/>
<feature type="chain" id="PRO_0000105015" description="Integration host factor subunit alpha">
    <location>
        <begin position="1"/>
        <end position="99"/>
    </location>
</feature>
<evidence type="ECO:0000250" key="1"/>
<evidence type="ECO:0000305" key="2"/>
<reference key="1">
    <citation type="journal article" date="1997" name="FEMS Microbiol. Lett.">
        <title>Isolation and characterization of the integration host factor genes of Pasteurella haemolytica.</title>
        <authorList>
            <person name="Highlander S.K."/>
            <person name="Garza O."/>
            <person name="Brown B.J."/>
            <person name="Koby S."/>
            <person name="Oppenheim A.B."/>
        </authorList>
    </citation>
    <scope>NUCLEOTIDE SEQUENCE [GENOMIC DNA]</scope>
    <source>
        <strain>Serotype A1 / PH101</strain>
    </source>
</reference>
<protein>
    <recommendedName>
        <fullName>Integration host factor subunit alpha</fullName>
        <shortName>IHF-alpha</shortName>
    </recommendedName>
</protein>
<comment type="function">
    <text evidence="1">This protein is one of the two subunits of integration host factor, a specific DNA-binding protein that functions in genetic recombination as well as in transcriptional and translational control.</text>
</comment>
<comment type="subunit">
    <text>Heterodimer of an alpha and a beta chain.</text>
</comment>
<comment type="similarity">
    <text evidence="2">Belongs to the bacterial histone-like protein family.</text>
</comment>
<gene>
    <name type="primary">ihfA</name>
    <name type="synonym">himA</name>
</gene>
<keyword id="KW-0233">DNA recombination</keyword>
<keyword id="KW-0238">DNA-binding</keyword>
<keyword id="KW-0804">Transcription</keyword>
<keyword id="KW-0805">Transcription regulation</keyword>
<keyword id="KW-0810">Translation regulation</keyword>
<organism>
    <name type="scientific">Mannheimia haemolytica</name>
    <name type="common">Pasteurella haemolytica</name>
    <dbReference type="NCBI Taxonomy" id="75985"/>
    <lineage>
        <taxon>Bacteria</taxon>
        <taxon>Pseudomonadati</taxon>
        <taxon>Pseudomonadota</taxon>
        <taxon>Gammaproteobacteria</taxon>
        <taxon>Pasteurellales</taxon>
        <taxon>Pasteurellaceae</taxon>
        <taxon>Mannheimia</taxon>
    </lineage>
</organism>
<dbReference type="EMBL" id="U56138">
    <property type="protein sequence ID" value="AAC44843.1"/>
    <property type="molecule type" value="Genomic_DNA"/>
</dbReference>
<dbReference type="SMR" id="P95516"/>
<dbReference type="STRING" id="75985.WC39_06610"/>
<dbReference type="GO" id="GO:0005829">
    <property type="term" value="C:cytosol"/>
    <property type="evidence" value="ECO:0007669"/>
    <property type="project" value="TreeGrafter"/>
</dbReference>
<dbReference type="GO" id="GO:0003677">
    <property type="term" value="F:DNA binding"/>
    <property type="evidence" value="ECO:0007669"/>
    <property type="project" value="UniProtKB-UniRule"/>
</dbReference>
<dbReference type="GO" id="GO:0030527">
    <property type="term" value="F:structural constituent of chromatin"/>
    <property type="evidence" value="ECO:0007669"/>
    <property type="project" value="InterPro"/>
</dbReference>
<dbReference type="GO" id="GO:0006310">
    <property type="term" value="P:DNA recombination"/>
    <property type="evidence" value="ECO:0007669"/>
    <property type="project" value="UniProtKB-UniRule"/>
</dbReference>
<dbReference type="GO" id="GO:0009893">
    <property type="term" value="P:positive regulation of metabolic process"/>
    <property type="evidence" value="ECO:0007669"/>
    <property type="project" value="UniProtKB-ARBA"/>
</dbReference>
<dbReference type="GO" id="GO:0006355">
    <property type="term" value="P:regulation of DNA-templated transcription"/>
    <property type="evidence" value="ECO:0007669"/>
    <property type="project" value="UniProtKB-UniRule"/>
</dbReference>
<dbReference type="GO" id="GO:0006417">
    <property type="term" value="P:regulation of translation"/>
    <property type="evidence" value="ECO:0007669"/>
    <property type="project" value="UniProtKB-UniRule"/>
</dbReference>
<dbReference type="CDD" id="cd13835">
    <property type="entry name" value="IHF_A"/>
    <property type="match status" value="1"/>
</dbReference>
<dbReference type="FunFam" id="4.10.520.10:FF:000002">
    <property type="entry name" value="Integration host factor subunit alpha"/>
    <property type="match status" value="1"/>
</dbReference>
<dbReference type="Gene3D" id="4.10.520.10">
    <property type="entry name" value="IHF-like DNA-binding proteins"/>
    <property type="match status" value="1"/>
</dbReference>
<dbReference type="HAMAP" id="MF_00380">
    <property type="entry name" value="IHF_alpha"/>
    <property type="match status" value="1"/>
</dbReference>
<dbReference type="InterPro" id="IPR000119">
    <property type="entry name" value="Hist_DNA-bd"/>
</dbReference>
<dbReference type="InterPro" id="IPR020816">
    <property type="entry name" value="Histone-like_DNA-bd_CS"/>
</dbReference>
<dbReference type="InterPro" id="IPR010992">
    <property type="entry name" value="IHF-like_DNA-bd_dom_sf"/>
</dbReference>
<dbReference type="InterPro" id="IPR005684">
    <property type="entry name" value="IHF_alpha"/>
</dbReference>
<dbReference type="NCBIfam" id="TIGR00987">
    <property type="entry name" value="himA"/>
    <property type="match status" value="1"/>
</dbReference>
<dbReference type="NCBIfam" id="NF001401">
    <property type="entry name" value="PRK00285.1"/>
    <property type="match status" value="1"/>
</dbReference>
<dbReference type="PANTHER" id="PTHR33175">
    <property type="entry name" value="DNA-BINDING PROTEIN HU"/>
    <property type="match status" value="1"/>
</dbReference>
<dbReference type="PANTHER" id="PTHR33175:SF2">
    <property type="entry name" value="INTEGRATION HOST FACTOR SUBUNIT ALPHA"/>
    <property type="match status" value="1"/>
</dbReference>
<dbReference type="Pfam" id="PF00216">
    <property type="entry name" value="Bac_DNA_binding"/>
    <property type="match status" value="1"/>
</dbReference>
<dbReference type="PRINTS" id="PR01727">
    <property type="entry name" value="DNABINDINGHU"/>
</dbReference>
<dbReference type="SMART" id="SM00411">
    <property type="entry name" value="BHL"/>
    <property type="match status" value="1"/>
</dbReference>
<dbReference type="SUPFAM" id="SSF47729">
    <property type="entry name" value="IHF-like DNA-binding proteins"/>
    <property type="match status" value="1"/>
</dbReference>
<dbReference type="PROSITE" id="PS00045">
    <property type="entry name" value="HISTONE_LIKE"/>
    <property type="match status" value="1"/>
</dbReference>
<name>IHFA_MANHA</name>
<sequence length="99" mass="11187">MMALTKIEIAENLIEKFGLEKRVANEFVELFFEEIRSSLENGEEVKLSGFGNFSLREKKARPGRNPKTGENVAVSARRVVVFKAGQKLRERVEQASSQS</sequence>
<accession>P95516</accession>